<dbReference type="EC" id="3.4.21.88" evidence="1"/>
<dbReference type="EMBL" id="BA000016">
    <property type="protein sequence ID" value="BAB80867.1"/>
    <property type="molecule type" value="Genomic_DNA"/>
</dbReference>
<dbReference type="SMR" id="Q8XL81"/>
<dbReference type="STRING" id="195102.gene:10490424"/>
<dbReference type="MEROPS" id="S24.001"/>
<dbReference type="KEGG" id="cpe:CPE1161"/>
<dbReference type="HOGENOM" id="CLU_066192_45_1_9"/>
<dbReference type="Proteomes" id="UP000000818">
    <property type="component" value="Chromosome"/>
</dbReference>
<dbReference type="GO" id="GO:0003677">
    <property type="term" value="F:DNA binding"/>
    <property type="evidence" value="ECO:0007669"/>
    <property type="project" value="UniProtKB-UniRule"/>
</dbReference>
<dbReference type="GO" id="GO:0004252">
    <property type="term" value="F:serine-type endopeptidase activity"/>
    <property type="evidence" value="ECO:0007669"/>
    <property type="project" value="UniProtKB-UniRule"/>
</dbReference>
<dbReference type="GO" id="GO:0006281">
    <property type="term" value="P:DNA repair"/>
    <property type="evidence" value="ECO:0007669"/>
    <property type="project" value="UniProtKB-UniRule"/>
</dbReference>
<dbReference type="GO" id="GO:0006260">
    <property type="term" value="P:DNA replication"/>
    <property type="evidence" value="ECO:0007669"/>
    <property type="project" value="UniProtKB-UniRule"/>
</dbReference>
<dbReference type="GO" id="GO:0045892">
    <property type="term" value="P:negative regulation of DNA-templated transcription"/>
    <property type="evidence" value="ECO:0007669"/>
    <property type="project" value="UniProtKB-UniRule"/>
</dbReference>
<dbReference type="GO" id="GO:0006508">
    <property type="term" value="P:proteolysis"/>
    <property type="evidence" value="ECO:0007669"/>
    <property type="project" value="InterPro"/>
</dbReference>
<dbReference type="GO" id="GO:0009432">
    <property type="term" value="P:SOS response"/>
    <property type="evidence" value="ECO:0007669"/>
    <property type="project" value="UniProtKB-UniRule"/>
</dbReference>
<dbReference type="CDD" id="cd00090">
    <property type="entry name" value="HTH_ARSR"/>
    <property type="match status" value="1"/>
</dbReference>
<dbReference type="CDD" id="cd06529">
    <property type="entry name" value="S24_LexA-like"/>
    <property type="match status" value="1"/>
</dbReference>
<dbReference type="FunFam" id="2.10.109.10:FF:000001">
    <property type="entry name" value="LexA repressor"/>
    <property type="match status" value="1"/>
</dbReference>
<dbReference type="Gene3D" id="2.10.109.10">
    <property type="entry name" value="Umud Fragment, subunit A"/>
    <property type="match status" value="1"/>
</dbReference>
<dbReference type="Gene3D" id="1.10.10.10">
    <property type="entry name" value="Winged helix-like DNA-binding domain superfamily/Winged helix DNA-binding domain"/>
    <property type="match status" value="1"/>
</dbReference>
<dbReference type="HAMAP" id="MF_00015">
    <property type="entry name" value="LexA"/>
    <property type="match status" value="1"/>
</dbReference>
<dbReference type="InterPro" id="IPR011991">
    <property type="entry name" value="ArsR-like_HTH"/>
</dbReference>
<dbReference type="InterPro" id="IPR006200">
    <property type="entry name" value="LexA"/>
</dbReference>
<dbReference type="InterPro" id="IPR039418">
    <property type="entry name" value="LexA-like"/>
</dbReference>
<dbReference type="InterPro" id="IPR036286">
    <property type="entry name" value="LexA/Signal_pep-like_sf"/>
</dbReference>
<dbReference type="InterPro" id="IPR006199">
    <property type="entry name" value="LexA_DNA-bd_dom"/>
</dbReference>
<dbReference type="InterPro" id="IPR050077">
    <property type="entry name" value="LexA_repressor"/>
</dbReference>
<dbReference type="InterPro" id="IPR006197">
    <property type="entry name" value="Peptidase_S24_LexA"/>
</dbReference>
<dbReference type="InterPro" id="IPR015927">
    <property type="entry name" value="Peptidase_S24_S26A/B/C"/>
</dbReference>
<dbReference type="InterPro" id="IPR036388">
    <property type="entry name" value="WH-like_DNA-bd_sf"/>
</dbReference>
<dbReference type="InterPro" id="IPR036390">
    <property type="entry name" value="WH_DNA-bd_sf"/>
</dbReference>
<dbReference type="NCBIfam" id="TIGR00498">
    <property type="entry name" value="lexA"/>
    <property type="match status" value="1"/>
</dbReference>
<dbReference type="PANTHER" id="PTHR33516">
    <property type="entry name" value="LEXA REPRESSOR"/>
    <property type="match status" value="1"/>
</dbReference>
<dbReference type="PANTHER" id="PTHR33516:SF2">
    <property type="entry name" value="LEXA REPRESSOR-RELATED"/>
    <property type="match status" value="1"/>
</dbReference>
<dbReference type="Pfam" id="PF01726">
    <property type="entry name" value="LexA_DNA_bind"/>
    <property type="match status" value="1"/>
</dbReference>
<dbReference type="Pfam" id="PF00717">
    <property type="entry name" value="Peptidase_S24"/>
    <property type="match status" value="1"/>
</dbReference>
<dbReference type="PRINTS" id="PR00726">
    <property type="entry name" value="LEXASERPTASE"/>
</dbReference>
<dbReference type="SUPFAM" id="SSF51306">
    <property type="entry name" value="LexA/Signal peptidase"/>
    <property type="match status" value="1"/>
</dbReference>
<dbReference type="SUPFAM" id="SSF46785">
    <property type="entry name" value="Winged helix' DNA-binding domain"/>
    <property type="match status" value="1"/>
</dbReference>
<keyword id="KW-0068">Autocatalytic cleavage</keyword>
<keyword id="KW-0227">DNA damage</keyword>
<keyword id="KW-0234">DNA repair</keyword>
<keyword id="KW-0235">DNA replication</keyword>
<keyword id="KW-0238">DNA-binding</keyword>
<keyword id="KW-0378">Hydrolase</keyword>
<keyword id="KW-1185">Reference proteome</keyword>
<keyword id="KW-0678">Repressor</keyword>
<keyword id="KW-0742">SOS response</keyword>
<keyword id="KW-0804">Transcription</keyword>
<keyword id="KW-0805">Transcription regulation</keyword>
<accession>Q8XL81</accession>
<reference key="1">
    <citation type="journal article" date="2002" name="Proc. Natl. Acad. Sci. U.S.A.">
        <title>Complete genome sequence of Clostridium perfringens, an anaerobic flesh-eater.</title>
        <authorList>
            <person name="Shimizu T."/>
            <person name="Ohtani K."/>
            <person name="Hirakawa H."/>
            <person name="Ohshima K."/>
            <person name="Yamashita A."/>
            <person name="Shiba T."/>
            <person name="Ogasawara N."/>
            <person name="Hattori M."/>
            <person name="Kuhara S."/>
            <person name="Hayashi H."/>
        </authorList>
    </citation>
    <scope>NUCLEOTIDE SEQUENCE [LARGE SCALE GENOMIC DNA]</scope>
    <source>
        <strain>13 / Type A</strain>
    </source>
</reference>
<protein>
    <recommendedName>
        <fullName evidence="1">LexA repressor</fullName>
        <ecNumber evidence="1">3.4.21.88</ecNumber>
    </recommendedName>
</protein>
<name>LEXA_CLOPE</name>
<sequence>MIIKENSDKQTQIYNFLIEFTKSKGYPPSVREICQAVSLKSTSTVHGHLKRLEKKGLIYRDPTKPRALEIVELSNEEKELIDIPIVGKVTAGMPILATENIEDMFQMPINYVKHNNDLFILKVTGDSMIEAGILDGDLAIIEQKNVATNGDIVVALIENEATIKRFFKENGFIRLQPENKNYEPIIVEDCSILGKLVGIYRAY</sequence>
<comment type="function">
    <text evidence="1">Represses a number of genes involved in the response to DNA damage (SOS response), including recA and lexA. In the presence of single-stranded DNA, RecA interacts with LexA causing an autocatalytic cleavage which disrupts the DNA-binding part of LexA, leading to derepression of the SOS regulon and eventually DNA repair.</text>
</comment>
<comment type="catalytic activity">
    <reaction evidence="1">
        <text>Hydrolysis of Ala-|-Gly bond in repressor LexA.</text>
        <dbReference type="EC" id="3.4.21.88"/>
    </reaction>
</comment>
<comment type="subunit">
    <text evidence="1">Homodimer.</text>
</comment>
<comment type="similarity">
    <text evidence="1">Belongs to the peptidase S24 family.</text>
</comment>
<evidence type="ECO:0000255" key="1">
    <source>
        <dbReference type="HAMAP-Rule" id="MF_00015"/>
    </source>
</evidence>
<feature type="chain" id="PRO_0000170025" description="LexA repressor">
    <location>
        <begin position="1"/>
        <end position="203"/>
    </location>
</feature>
<feature type="DNA-binding region" description="H-T-H motif" evidence="1">
    <location>
        <begin position="30"/>
        <end position="50"/>
    </location>
</feature>
<feature type="active site" description="For autocatalytic cleavage activity" evidence="1">
    <location>
        <position position="127"/>
    </location>
</feature>
<feature type="active site" description="For autocatalytic cleavage activity" evidence="1">
    <location>
        <position position="164"/>
    </location>
</feature>
<feature type="site" description="Cleavage; by autolysis" evidence="1">
    <location>
        <begin position="91"/>
        <end position="92"/>
    </location>
</feature>
<gene>
    <name evidence="1" type="primary">lexA</name>
    <name type="ordered locus">CPE1161</name>
</gene>
<organism>
    <name type="scientific">Clostridium perfringens (strain 13 / Type A)</name>
    <dbReference type="NCBI Taxonomy" id="195102"/>
    <lineage>
        <taxon>Bacteria</taxon>
        <taxon>Bacillati</taxon>
        <taxon>Bacillota</taxon>
        <taxon>Clostridia</taxon>
        <taxon>Eubacteriales</taxon>
        <taxon>Clostridiaceae</taxon>
        <taxon>Clostridium</taxon>
    </lineage>
</organism>
<proteinExistence type="inferred from homology"/>